<comment type="function">
    <text evidence="1">Part of the Sec protein translocase complex. Interacts with the SecYEG preprotein conducting channel. Has a central role in coupling the hydrolysis of ATP to the transfer of proteins into and across the cell membrane, serving as an ATP-driven molecular motor driving the stepwise translocation of polypeptide chains across the membrane.</text>
</comment>
<comment type="catalytic activity">
    <reaction evidence="1">
        <text>ATP + H2O + cellular proteinSide 1 = ADP + phosphate + cellular proteinSide 2.</text>
        <dbReference type="EC" id="7.4.2.8"/>
    </reaction>
</comment>
<comment type="subunit">
    <text evidence="1">Monomer and homodimer. Part of the essential Sec protein translocation apparatus which comprises SecA, SecYEG and auxiliary proteins SecDF. Other proteins may also be involved.</text>
</comment>
<comment type="subcellular location">
    <subcellularLocation>
        <location evidence="1">Cell membrane</location>
        <topology evidence="1">Peripheral membrane protein</topology>
        <orientation evidence="1">Cytoplasmic side</orientation>
    </subcellularLocation>
    <subcellularLocation>
        <location evidence="1">Cytoplasm</location>
    </subcellularLocation>
    <text evidence="1">Distribution is 50-50.</text>
</comment>
<comment type="similarity">
    <text evidence="1">Belongs to the SecA family.</text>
</comment>
<gene>
    <name evidence="1" type="primary">secA1</name>
    <name type="ordered locus">Mkms_1371</name>
</gene>
<feature type="chain" id="PRO_0000318386" description="Protein translocase subunit SecA 1">
    <location>
        <begin position="1"/>
        <end position="947"/>
    </location>
</feature>
<feature type="region of interest" description="Disordered" evidence="2">
    <location>
        <begin position="860"/>
        <end position="947"/>
    </location>
</feature>
<feature type="compositionally biased region" description="Basic and acidic residues" evidence="2">
    <location>
        <begin position="925"/>
        <end position="934"/>
    </location>
</feature>
<feature type="compositionally biased region" description="Basic residues" evidence="2">
    <location>
        <begin position="935"/>
        <end position="947"/>
    </location>
</feature>
<feature type="binding site" evidence="1">
    <location>
        <position position="83"/>
    </location>
    <ligand>
        <name>ATP</name>
        <dbReference type="ChEBI" id="CHEBI:30616"/>
    </ligand>
</feature>
<feature type="binding site" evidence="1">
    <location>
        <begin position="101"/>
        <end position="105"/>
    </location>
    <ligand>
        <name>ATP</name>
        <dbReference type="ChEBI" id="CHEBI:30616"/>
    </ligand>
</feature>
<feature type="binding site" evidence="1">
    <location>
        <position position="490"/>
    </location>
    <ligand>
        <name>ATP</name>
        <dbReference type="ChEBI" id="CHEBI:30616"/>
    </ligand>
</feature>
<protein>
    <recommendedName>
        <fullName evidence="1">Protein translocase subunit SecA 1</fullName>
        <ecNumber evidence="1">7.4.2.8</ecNumber>
    </recommendedName>
</protein>
<name>SECA1_MYCSK</name>
<proteinExistence type="inferred from homology"/>
<sequence>MLDKLLRLGEGRMVKRLKKVADYVNTLSDDVEKLSDAELRAKTDEFRKRIDGGEDLDDLLPEAFAVAREAAWRVLSQRHFDVQVMGGAALHFGNVAEMKTGEGKTLTCVLPAYLNALSGKGVHVVTVNDYLAKRDAEWMGRVHRFLGLDVGVILSGLTPDERRAAYHADITYGTNNEFGFDYLRDNMAHRLEDRVQRGHNFAVVDEVDSILIDEARTPLIISGPADAASNWYSEFARLAPLMEKDVHYEVDLRKRTVGVHEVGVEFVEDQLGIENLYEAANSPLVSYLNNALKAKELFQRDKDYIVRNGEVLIVDEFTGRVLLGRRYNEGMHQAIEAKEHVEIKAENQTLATITLQNYFRLYDKLAGMTGTAQTEAAELHEIYKLGVVPIPTNRDMIRQDQTDLIYKTEEAKFIAVVDDVYERYEKGQPVLIGTTSVERSEYLSKQFTKRKIPHNVLNAKYHEQEANIIAEAGRLGAITVATNMAGRGTDIVLGGNVDFLADKRLREQGLDPVETPEEYEAAWESTLNQIKAEAEEEADDVRAVGGLYVLGTERHESRRIDNQLRGRSGRQGDPGESRFYLSLGDELMRRFNGATLEALLTRLNLPDDVPIEAKMVTRAIKSAQTQVEQQNFEVRKNVLKYDEVMNQQRKVIYEERRRILEGEDLAEQAHKMLVDVVTAYVNGATAEGYAEDWDLEQLWTALKQLYPVGIDYHDLVDSDAVGEAGELTREELLDMLIKDAERAYAERERELEELAGEGAMRQLERNVLLNVIDRKWREHLYEMDYLKEGIGLRAMAQRDPLVEYQREGYDMFVGMLEALKEESVGFLFNVTVEAAPAAPSNRVAPVAAPPGLSEFAAAAAKAQEQTGQGAVATKERETPAPTLRAKGIDNDDTPPLTYVGPGEDGSAEVQRSNGGPRHAAPGGATRRERREAARKQAKTSKPTRRRG</sequence>
<dbReference type="EC" id="7.4.2.8" evidence="1"/>
<dbReference type="EMBL" id="CP000518">
    <property type="protein sequence ID" value="ABL90583.1"/>
    <property type="molecule type" value="Genomic_DNA"/>
</dbReference>
<dbReference type="SMR" id="A1UCM5"/>
<dbReference type="STRING" id="189918.Mkms_1371"/>
<dbReference type="KEGG" id="mkm:Mkms_1371"/>
<dbReference type="HOGENOM" id="CLU_005314_3_0_11"/>
<dbReference type="OrthoDB" id="9805579at2"/>
<dbReference type="GO" id="GO:0031522">
    <property type="term" value="C:cell envelope Sec protein transport complex"/>
    <property type="evidence" value="ECO:0007669"/>
    <property type="project" value="TreeGrafter"/>
</dbReference>
<dbReference type="GO" id="GO:0005829">
    <property type="term" value="C:cytosol"/>
    <property type="evidence" value="ECO:0007669"/>
    <property type="project" value="TreeGrafter"/>
</dbReference>
<dbReference type="GO" id="GO:0005886">
    <property type="term" value="C:plasma membrane"/>
    <property type="evidence" value="ECO:0007669"/>
    <property type="project" value="UniProtKB-SubCell"/>
</dbReference>
<dbReference type="GO" id="GO:0005524">
    <property type="term" value="F:ATP binding"/>
    <property type="evidence" value="ECO:0007669"/>
    <property type="project" value="UniProtKB-UniRule"/>
</dbReference>
<dbReference type="GO" id="GO:0008564">
    <property type="term" value="F:protein-exporting ATPase activity"/>
    <property type="evidence" value="ECO:0007669"/>
    <property type="project" value="UniProtKB-EC"/>
</dbReference>
<dbReference type="GO" id="GO:0065002">
    <property type="term" value="P:intracellular protein transmembrane transport"/>
    <property type="evidence" value="ECO:0007669"/>
    <property type="project" value="UniProtKB-UniRule"/>
</dbReference>
<dbReference type="GO" id="GO:0017038">
    <property type="term" value="P:protein import"/>
    <property type="evidence" value="ECO:0007669"/>
    <property type="project" value="InterPro"/>
</dbReference>
<dbReference type="GO" id="GO:0006605">
    <property type="term" value="P:protein targeting"/>
    <property type="evidence" value="ECO:0007669"/>
    <property type="project" value="UniProtKB-UniRule"/>
</dbReference>
<dbReference type="GO" id="GO:0043952">
    <property type="term" value="P:protein transport by the Sec complex"/>
    <property type="evidence" value="ECO:0007669"/>
    <property type="project" value="TreeGrafter"/>
</dbReference>
<dbReference type="CDD" id="cd17928">
    <property type="entry name" value="DEXDc_SecA"/>
    <property type="match status" value="1"/>
</dbReference>
<dbReference type="CDD" id="cd18803">
    <property type="entry name" value="SF2_C_secA"/>
    <property type="match status" value="1"/>
</dbReference>
<dbReference type="FunFam" id="1.10.3060.10:FF:000002">
    <property type="entry name" value="Preprotein translocase subunit SecA"/>
    <property type="match status" value="1"/>
</dbReference>
<dbReference type="FunFam" id="3.40.50.300:FF:000113">
    <property type="entry name" value="Preprotein translocase subunit SecA"/>
    <property type="match status" value="1"/>
</dbReference>
<dbReference type="FunFam" id="3.40.50.300:FF:000334">
    <property type="entry name" value="Protein translocase subunit SecA"/>
    <property type="match status" value="1"/>
</dbReference>
<dbReference type="FunFam" id="3.90.1440.10:FF:000002">
    <property type="entry name" value="Protein translocase subunit SecA"/>
    <property type="match status" value="1"/>
</dbReference>
<dbReference type="Gene3D" id="1.10.3060.10">
    <property type="entry name" value="Helical scaffold and wing domains of SecA"/>
    <property type="match status" value="1"/>
</dbReference>
<dbReference type="Gene3D" id="3.40.50.300">
    <property type="entry name" value="P-loop containing nucleotide triphosphate hydrolases"/>
    <property type="match status" value="2"/>
</dbReference>
<dbReference type="Gene3D" id="3.90.1440.10">
    <property type="entry name" value="SecA, preprotein cross-linking domain"/>
    <property type="match status" value="1"/>
</dbReference>
<dbReference type="HAMAP" id="MF_01382">
    <property type="entry name" value="SecA"/>
    <property type="match status" value="1"/>
</dbReference>
<dbReference type="InterPro" id="IPR014001">
    <property type="entry name" value="Helicase_ATP-bd"/>
</dbReference>
<dbReference type="InterPro" id="IPR001650">
    <property type="entry name" value="Helicase_C-like"/>
</dbReference>
<dbReference type="InterPro" id="IPR027417">
    <property type="entry name" value="P-loop_NTPase"/>
</dbReference>
<dbReference type="InterPro" id="IPR000185">
    <property type="entry name" value="SecA"/>
</dbReference>
<dbReference type="InterPro" id="IPR020937">
    <property type="entry name" value="SecA_CS"/>
</dbReference>
<dbReference type="InterPro" id="IPR011115">
    <property type="entry name" value="SecA_DEAD"/>
</dbReference>
<dbReference type="InterPro" id="IPR014018">
    <property type="entry name" value="SecA_motor_DEAD"/>
</dbReference>
<dbReference type="InterPro" id="IPR011130">
    <property type="entry name" value="SecA_preprotein_X-link_dom"/>
</dbReference>
<dbReference type="InterPro" id="IPR044722">
    <property type="entry name" value="SecA_SF2_C"/>
</dbReference>
<dbReference type="InterPro" id="IPR011116">
    <property type="entry name" value="SecA_Wing/Scaffold"/>
</dbReference>
<dbReference type="InterPro" id="IPR036266">
    <property type="entry name" value="SecA_Wing/Scaffold_sf"/>
</dbReference>
<dbReference type="InterPro" id="IPR036670">
    <property type="entry name" value="SecA_X-link_sf"/>
</dbReference>
<dbReference type="NCBIfam" id="NF009538">
    <property type="entry name" value="PRK12904.1"/>
    <property type="match status" value="1"/>
</dbReference>
<dbReference type="NCBIfam" id="TIGR00963">
    <property type="entry name" value="secA"/>
    <property type="match status" value="1"/>
</dbReference>
<dbReference type="PANTHER" id="PTHR30612:SF0">
    <property type="entry name" value="CHLOROPLAST PROTEIN-TRANSPORTING ATPASE"/>
    <property type="match status" value="1"/>
</dbReference>
<dbReference type="PANTHER" id="PTHR30612">
    <property type="entry name" value="SECA INNER MEMBRANE COMPONENT OF SEC PROTEIN SECRETION SYSTEM"/>
    <property type="match status" value="1"/>
</dbReference>
<dbReference type="Pfam" id="PF21090">
    <property type="entry name" value="P-loop_SecA"/>
    <property type="match status" value="1"/>
</dbReference>
<dbReference type="Pfam" id="PF07517">
    <property type="entry name" value="SecA_DEAD"/>
    <property type="match status" value="1"/>
</dbReference>
<dbReference type="Pfam" id="PF01043">
    <property type="entry name" value="SecA_PP_bind"/>
    <property type="match status" value="1"/>
</dbReference>
<dbReference type="Pfam" id="PF07516">
    <property type="entry name" value="SecA_SW"/>
    <property type="match status" value="1"/>
</dbReference>
<dbReference type="PRINTS" id="PR00906">
    <property type="entry name" value="SECA"/>
</dbReference>
<dbReference type="SMART" id="SM00957">
    <property type="entry name" value="SecA_DEAD"/>
    <property type="match status" value="1"/>
</dbReference>
<dbReference type="SMART" id="SM00958">
    <property type="entry name" value="SecA_PP_bind"/>
    <property type="match status" value="1"/>
</dbReference>
<dbReference type="SUPFAM" id="SSF81886">
    <property type="entry name" value="Helical scaffold and wing domains of SecA"/>
    <property type="match status" value="1"/>
</dbReference>
<dbReference type="SUPFAM" id="SSF52540">
    <property type="entry name" value="P-loop containing nucleoside triphosphate hydrolases"/>
    <property type="match status" value="2"/>
</dbReference>
<dbReference type="SUPFAM" id="SSF81767">
    <property type="entry name" value="Pre-protein crosslinking domain of SecA"/>
    <property type="match status" value="1"/>
</dbReference>
<dbReference type="PROSITE" id="PS01312">
    <property type="entry name" value="SECA"/>
    <property type="match status" value="1"/>
</dbReference>
<dbReference type="PROSITE" id="PS51196">
    <property type="entry name" value="SECA_MOTOR_DEAD"/>
    <property type="match status" value="1"/>
</dbReference>
<evidence type="ECO:0000255" key="1">
    <source>
        <dbReference type="HAMAP-Rule" id="MF_01382"/>
    </source>
</evidence>
<evidence type="ECO:0000256" key="2">
    <source>
        <dbReference type="SAM" id="MobiDB-lite"/>
    </source>
</evidence>
<keyword id="KW-0067">ATP-binding</keyword>
<keyword id="KW-1003">Cell membrane</keyword>
<keyword id="KW-0963">Cytoplasm</keyword>
<keyword id="KW-0472">Membrane</keyword>
<keyword id="KW-0547">Nucleotide-binding</keyword>
<keyword id="KW-0653">Protein transport</keyword>
<keyword id="KW-1278">Translocase</keyword>
<keyword id="KW-0811">Translocation</keyword>
<keyword id="KW-0813">Transport</keyword>
<accession>A1UCM5</accession>
<reference key="1">
    <citation type="submission" date="2006-12" db="EMBL/GenBank/DDBJ databases">
        <title>Complete sequence of chromosome of Mycobacterium sp. KMS.</title>
        <authorList>
            <consortium name="US DOE Joint Genome Institute"/>
            <person name="Copeland A."/>
            <person name="Lucas S."/>
            <person name="Lapidus A."/>
            <person name="Barry K."/>
            <person name="Detter J.C."/>
            <person name="Glavina del Rio T."/>
            <person name="Hammon N."/>
            <person name="Israni S."/>
            <person name="Dalin E."/>
            <person name="Tice H."/>
            <person name="Pitluck S."/>
            <person name="Kiss H."/>
            <person name="Brettin T."/>
            <person name="Bruce D."/>
            <person name="Han C."/>
            <person name="Tapia R."/>
            <person name="Gilna P."/>
            <person name="Schmutz J."/>
            <person name="Larimer F."/>
            <person name="Land M."/>
            <person name="Hauser L."/>
            <person name="Kyrpides N."/>
            <person name="Mikhailova N."/>
            <person name="Miller C.D."/>
            <person name="Richardson P."/>
        </authorList>
    </citation>
    <scope>NUCLEOTIDE SEQUENCE [LARGE SCALE GENOMIC DNA]</scope>
    <source>
        <strain>KMS</strain>
    </source>
</reference>
<organism>
    <name type="scientific">Mycobacterium sp. (strain KMS)</name>
    <dbReference type="NCBI Taxonomy" id="189918"/>
    <lineage>
        <taxon>Bacteria</taxon>
        <taxon>Bacillati</taxon>
        <taxon>Actinomycetota</taxon>
        <taxon>Actinomycetes</taxon>
        <taxon>Mycobacteriales</taxon>
        <taxon>Mycobacteriaceae</taxon>
        <taxon>Mycobacterium</taxon>
    </lineage>
</organism>